<organism>
    <name type="scientific">Corynebacterium diphtheriae (strain ATCC 700971 / NCTC 13129 / Biotype gravis)</name>
    <dbReference type="NCBI Taxonomy" id="257309"/>
    <lineage>
        <taxon>Bacteria</taxon>
        <taxon>Bacillati</taxon>
        <taxon>Actinomycetota</taxon>
        <taxon>Actinomycetes</taxon>
        <taxon>Mycobacteriales</taxon>
        <taxon>Corynebacteriaceae</taxon>
        <taxon>Corynebacterium</taxon>
    </lineage>
</organism>
<gene>
    <name evidence="1" type="primary">ilvC</name>
    <name type="ordered locus">DIP1100</name>
</gene>
<evidence type="ECO:0000255" key="1">
    <source>
        <dbReference type="HAMAP-Rule" id="MF_00435"/>
    </source>
</evidence>
<evidence type="ECO:0000255" key="2">
    <source>
        <dbReference type="PROSITE-ProRule" id="PRU01197"/>
    </source>
</evidence>
<evidence type="ECO:0000255" key="3">
    <source>
        <dbReference type="PROSITE-ProRule" id="PRU01198"/>
    </source>
</evidence>
<accession>Q6NHN2</accession>
<feature type="chain" id="PRO_0000151304" description="Ketol-acid reductoisomerase (NADP(+))">
    <location>
        <begin position="1"/>
        <end position="337"/>
    </location>
</feature>
<feature type="domain" description="KARI N-terminal Rossmann" evidence="2">
    <location>
        <begin position="3"/>
        <end position="183"/>
    </location>
</feature>
<feature type="domain" description="KARI C-terminal knotted" evidence="3">
    <location>
        <begin position="184"/>
        <end position="329"/>
    </location>
</feature>
<feature type="active site" evidence="1">
    <location>
        <position position="109"/>
    </location>
</feature>
<feature type="binding site" evidence="1">
    <location>
        <begin position="26"/>
        <end position="29"/>
    </location>
    <ligand>
        <name>NADP(+)</name>
        <dbReference type="ChEBI" id="CHEBI:58349"/>
    </ligand>
</feature>
<feature type="binding site" evidence="1">
    <location>
        <position position="49"/>
    </location>
    <ligand>
        <name>NADP(+)</name>
        <dbReference type="ChEBI" id="CHEBI:58349"/>
    </ligand>
</feature>
<feature type="binding site" evidence="1">
    <location>
        <position position="52"/>
    </location>
    <ligand>
        <name>NADP(+)</name>
        <dbReference type="ChEBI" id="CHEBI:58349"/>
    </ligand>
</feature>
<feature type="binding site" evidence="1">
    <location>
        <position position="54"/>
    </location>
    <ligand>
        <name>NADP(+)</name>
        <dbReference type="ChEBI" id="CHEBI:58349"/>
    </ligand>
</feature>
<feature type="binding site" evidence="1">
    <location>
        <begin position="84"/>
        <end position="87"/>
    </location>
    <ligand>
        <name>NADP(+)</name>
        <dbReference type="ChEBI" id="CHEBI:58349"/>
    </ligand>
</feature>
<feature type="binding site" evidence="1">
    <location>
        <position position="135"/>
    </location>
    <ligand>
        <name>NADP(+)</name>
        <dbReference type="ChEBI" id="CHEBI:58349"/>
    </ligand>
</feature>
<feature type="binding site" evidence="1">
    <location>
        <position position="192"/>
    </location>
    <ligand>
        <name>Mg(2+)</name>
        <dbReference type="ChEBI" id="CHEBI:18420"/>
        <label>1</label>
    </ligand>
</feature>
<feature type="binding site" evidence="1">
    <location>
        <position position="192"/>
    </location>
    <ligand>
        <name>Mg(2+)</name>
        <dbReference type="ChEBI" id="CHEBI:18420"/>
        <label>2</label>
    </ligand>
</feature>
<feature type="binding site" evidence="1">
    <location>
        <position position="196"/>
    </location>
    <ligand>
        <name>Mg(2+)</name>
        <dbReference type="ChEBI" id="CHEBI:18420"/>
        <label>1</label>
    </ligand>
</feature>
<feature type="binding site" evidence="1">
    <location>
        <position position="228"/>
    </location>
    <ligand>
        <name>Mg(2+)</name>
        <dbReference type="ChEBI" id="CHEBI:18420"/>
        <label>2</label>
    </ligand>
</feature>
<feature type="binding site" evidence="1">
    <location>
        <position position="232"/>
    </location>
    <ligand>
        <name>Mg(2+)</name>
        <dbReference type="ChEBI" id="CHEBI:18420"/>
        <label>2</label>
    </ligand>
</feature>
<feature type="binding site" evidence="1">
    <location>
        <position position="253"/>
    </location>
    <ligand>
        <name>substrate</name>
    </ligand>
</feature>
<keyword id="KW-0028">Amino-acid biosynthesis</keyword>
<keyword id="KW-0100">Branched-chain amino acid biosynthesis</keyword>
<keyword id="KW-0460">Magnesium</keyword>
<keyword id="KW-0479">Metal-binding</keyword>
<keyword id="KW-0521">NADP</keyword>
<keyword id="KW-0560">Oxidoreductase</keyword>
<keyword id="KW-1185">Reference proteome</keyword>
<proteinExistence type="inferred from homology"/>
<protein>
    <recommendedName>
        <fullName evidence="1">Ketol-acid reductoisomerase (NADP(+))</fullName>
        <shortName evidence="1">KARI</shortName>
        <ecNumber evidence="1">1.1.1.86</ecNumber>
    </recommendedName>
    <alternativeName>
        <fullName evidence="1">Acetohydroxy-acid isomeroreductase</fullName>
        <shortName evidence="1">AHIR</shortName>
    </alternativeName>
    <alternativeName>
        <fullName evidence="1">Alpha-keto-beta-hydroxylacyl reductoisomerase</fullName>
    </alternativeName>
    <alternativeName>
        <fullName evidence="1">Ketol-acid reductoisomerase type 1</fullName>
    </alternativeName>
    <alternativeName>
        <fullName evidence="1">Ketol-acid reductoisomerase type I</fullName>
    </alternativeName>
</protein>
<dbReference type="EC" id="1.1.1.86" evidence="1"/>
<dbReference type="EMBL" id="BX248357">
    <property type="protein sequence ID" value="CAE49623.1"/>
    <property type="molecule type" value="Genomic_DNA"/>
</dbReference>
<dbReference type="RefSeq" id="WP_010934806.1">
    <property type="nucleotide sequence ID" value="NC_002935.2"/>
</dbReference>
<dbReference type="SMR" id="Q6NHN2"/>
<dbReference type="STRING" id="257309.DIP1100"/>
<dbReference type="KEGG" id="cdi:DIP1100"/>
<dbReference type="HOGENOM" id="CLU_033821_0_1_11"/>
<dbReference type="UniPathway" id="UPA00047">
    <property type="reaction ID" value="UER00056"/>
</dbReference>
<dbReference type="UniPathway" id="UPA00049">
    <property type="reaction ID" value="UER00060"/>
</dbReference>
<dbReference type="Proteomes" id="UP000002198">
    <property type="component" value="Chromosome"/>
</dbReference>
<dbReference type="GO" id="GO:0005829">
    <property type="term" value="C:cytosol"/>
    <property type="evidence" value="ECO:0007669"/>
    <property type="project" value="TreeGrafter"/>
</dbReference>
<dbReference type="GO" id="GO:0004455">
    <property type="term" value="F:ketol-acid reductoisomerase activity"/>
    <property type="evidence" value="ECO:0007669"/>
    <property type="project" value="UniProtKB-UniRule"/>
</dbReference>
<dbReference type="GO" id="GO:0000287">
    <property type="term" value="F:magnesium ion binding"/>
    <property type="evidence" value="ECO:0007669"/>
    <property type="project" value="UniProtKB-UniRule"/>
</dbReference>
<dbReference type="GO" id="GO:0050661">
    <property type="term" value="F:NADP binding"/>
    <property type="evidence" value="ECO:0007669"/>
    <property type="project" value="InterPro"/>
</dbReference>
<dbReference type="GO" id="GO:0009097">
    <property type="term" value="P:isoleucine biosynthetic process"/>
    <property type="evidence" value="ECO:0007669"/>
    <property type="project" value="UniProtKB-UniRule"/>
</dbReference>
<dbReference type="GO" id="GO:0009099">
    <property type="term" value="P:L-valine biosynthetic process"/>
    <property type="evidence" value="ECO:0007669"/>
    <property type="project" value="UniProtKB-UniRule"/>
</dbReference>
<dbReference type="FunFam" id="3.40.50.720:FF:000023">
    <property type="entry name" value="Ketol-acid reductoisomerase (NADP(+))"/>
    <property type="match status" value="1"/>
</dbReference>
<dbReference type="Gene3D" id="6.10.240.10">
    <property type="match status" value="1"/>
</dbReference>
<dbReference type="Gene3D" id="3.40.50.720">
    <property type="entry name" value="NAD(P)-binding Rossmann-like Domain"/>
    <property type="match status" value="1"/>
</dbReference>
<dbReference type="HAMAP" id="MF_00435">
    <property type="entry name" value="IlvC"/>
    <property type="match status" value="1"/>
</dbReference>
<dbReference type="InterPro" id="IPR008927">
    <property type="entry name" value="6-PGluconate_DH-like_C_sf"/>
</dbReference>
<dbReference type="InterPro" id="IPR013023">
    <property type="entry name" value="KARI"/>
</dbReference>
<dbReference type="InterPro" id="IPR000506">
    <property type="entry name" value="KARI_C"/>
</dbReference>
<dbReference type="InterPro" id="IPR013116">
    <property type="entry name" value="KARI_N"/>
</dbReference>
<dbReference type="InterPro" id="IPR014359">
    <property type="entry name" value="KARI_prok"/>
</dbReference>
<dbReference type="InterPro" id="IPR036291">
    <property type="entry name" value="NAD(P)-bd_dom_sf"/>
</dbReference>
<dbReference type="NCBIfam" id="TIGR00465">
    <property type="entry name" value="ilvC"/>
    <property type="match status" value="1"/>
</dbReference>
<dbReference type="NCBIfam" id="NF004017">
    <property type="entry name" value="PRK05479.1"/>
    <property type="match status" value="1"/>
</dbReference>
<dbReference type="NCBIfam" id="NF009940">
    <property type="entry name" value="PRK13403.1"/>
    <property type="match status" value="1"/>
</dbReference>
<dbReference type="PANTHER" id="PTHR21371">
    <property type="entry name" value="KETOL-ACID REDUCTOISOMERASE, MITOCHONDRIAL"/>
    <property type="match status" value="1"/>
</dbReference>
<dbReference type="PANTHER" id="PTHR21371:SF1">
    <property type="entry name" value="KETOL-ACID REDUCTOISOMERASE, MITOCHONDRIAL"/>
    <property type="match status" value="1"/>
</dbReference>
<dbReference type="Pfam" id="PF01450">
    <property type="entry name" value="KARI_C"/>
    <property type="match status" value="1"/>
</dbReference>
<dbReference type="Pfam" id="PF07991">
    <property type="entry name" value="KARI_N"/>
    <property type="match status" value="1"/>
</dbReference>
<dbReference type="PIRSF" id="PIRSF000116">
    <property type="entry name" value="IlvC_gammaproteo"/>
    <property type="match status" value="1"/>
</dbReference>
<dbReference type="SUPFAM" id="SSF48179">
    <property type="entry name" value="6-phosphogluconate dehydrogenase C-terminal domain-like"/>
    <property type="match status" value="1"/>
</dbReference>
<dbReference type="SUPFAM" id="SSF51735">
    <property type="entry name" value="NAD(P)-binding Rossmann-fold domains"/>
    <property type="match status" value="1"/>
</dbReference>
<dbReference type="PROSITE" id="PS51851">
    <property type="entry name" value="KARI_C"/>
    <property type="match status" value="1"/>
</dbReference>
<dbReference type="PROSITE" id="PS51850">
    <property type="entry name" value="KARI_N"/>
    <property type="match status" value="1"/>
</dbReference>
<reference key="1">
    <citation type="journal article" date="2003" name="Nucleic Acids Res.">
        <title>The complete genome sequence and analysis of Corynebacterium diphtheriae NCTC13129.</title>
        <authorList>
            <person name="Cerdeno-Tarraga A.-M."/>
            <person name="Efstratiou A."/>
            <person name="Dover L.G."/>
            <person name="Holden M.T.G."/>
            <person name="Pallen M.J."/>
            <person name="Bentley S.D."/>
            <person name="Besra G.S."/>
            <person name="Churcher C.M."/>
            <person name="James K.D."/>
            <person name="De Zoysa A."/>
            <person name="Chillingworth T."/>
            <person name="Cronin A."/>
            <person name="Dowd L."/>
            <person name="Feltwell T."/>
            <person name="Hamlin N."/>
            <person name="Holroyd S."/>
            <person name="Jagels K."/>
            <person name="Moule S."/>
            <person name="Quail M.A."/>
            <person name="Rabbinowitsch E."/>
            <person name="Rutherford K.M."/>
            <person name="Thomson N.R."/>
            <person name="Unwin L."/>
            <person name="Whitehead S."/>
            <person name="Barrell B.G."/>
            <person name="Parkhill J."/>
        </authorList>
    </citation>
    <scope>NUCLEOTIDE SEQUENCE [LARGE SCALE GENOMIC DNA]</scope>
    <source>
        <strain>ATCC 700971 / NCTC 13129 / Biotype gravis</strain>
    </source>
</reference>
<comment type="function">
    <text evidence="1">Involved in the biosynthesis of branched-chain amino acids (BCAA). Catalyzes an alkyl-migration followed by a ketol-acid reduction of (S)-2-acetolactate (S2AL) to yield (R)-2,3-dihydroxy-isovalerate. In the isomerase reaction, S2AL is rearranged via a Mg-dependent methyl migration to produce 3-hydroxy-3-methyl-2-ketobutyrate (HMKB). In the reductase reaction, this 2-ketoacid undergoes a metal-dependent reduction by NADPH to yield (R)-2,3-dihydroxy-isovalerate.</text>
</comment>
<comment type="catalytic activity">
    <reaction evidence="1">
        <text>(2R)-2,3-dihydroxy-3-methylbutanoate + NADP(+) = (2S)-2-acetolactate + NADPH + H(+)</text>
        <dbReference type="Rhea" id="RHEA:22068"/>
        <dbReference type="ChEBI" id="CHEBI:15378"/>
        <dbReference type="ChEBI" id="CHEBI:49072"/>
        <dbReference type="ChEBI" id="CHEBI:57783"/>
        <dbReference type="ChEBI" id="CHEBI:58349"/>
        <dbReference type="ChEBI" id="CHEBI:58476"/>
        <dbReference type="EC" id="1.1.1.86"/>
    </reaction>
</comment>
<comment type="catalytic activity">
    <reaction evidence="1">
        <text>(2R,3R)-2,3-dihydroxy-3-methylpentanoate + NADP(+) = (S)-2-ethyl-2-hydroxy-3-oxobutanoate + NADPH + H(+)</text>
        <dbReference type="Rhea" id="RHEA:13493"/>
        <dbReference type="ChEBI" id="CHEBI:15378"/>
        <dbReference type="ChEBI" id="CHEBI:49256"/>
        <dbReference type="ChEBI" id="CHEBI:49258"/>
        <dbReference type="ChEBI" id="CHEBI:57783"/>
        <dbReference type="ChEBI" id="CHEBI:58349"/>
        <dbReference type="EC" id="1.1.1.86"/>
    </reaction>
</comment>
<comment type="cofactor">
    <cofactor evidence="1">
        <name>Mg(2+)</name>
        <dbReference type="ChEBI" id="CHEBI:18420"/>
    </cofactor>
    <text evidence="1">Binds 2 magnesium ions per subunit.</text>
</comment>
<comment type="pathway">
    <text evidence="1">Amino-acid biosynthesis; L-isoleucine biosynthesis; L-isoleucine from 2-oxobutanoate: step 2/4.</text>
</comment>
<comment type="pathway">
    <text evidence="1">Amino-acid biosynthesis; L-valine biosynthesis; L-valine from pyruvate: step 2/4.</text>
</comment>
<comment type="similarity">
    <text evidence="1">Belongs to the ketol-acid reductoisomerase family.</text>
</comment>
<name>ILVC_CORDI</name>
<sequence length="337" mass="36283">MAIELLYDADADLSIIQGRKVAVIGYGSQGHAHAQCLRDSGVEVVIGLREGSKSSEKAQEAGFEVKSNADAAAWADVIMLLAPDTSQAEIFSHDIEPNLKDGDALLFGHGLNIHFELIKPAVNITVGMVAPKGPGHLVRRQFVDGKGVPCLIAVAQDPKGEGKDLALSYAAAIGGARAGVIPTTFREETETDLFGEQVVLCGGLEHLMMKGFEVLAEAGYAPEMAYFEVLHEMKLIVDLIWEGGIENMNYSISETAELGGYVAGPRIITPEVKENMKAVLADIQSGKFVRDMVADVEAGQPELKRYREEIAAHPIEATGSKLRDLMSWVKNPLDETA</sequence>